<reference key="1">
    <citation type="journal article" date="2011" name="J. Bacteriol.">
        <title>Genome of Ochrobactrum anthropi ATCC 49188 T, a versatile opportunistic pathogen and symbiont of several eukaryotic hosts.</title>
        <authorList>
            <person name="Chain P.S."/>
            <person name="Lang D.M."/>
            <person name="Comerci D.J."/>
            <person name="Malfatti S.A."/>
            <person name="Vergez L.M."/>
            <person name="Shin M."/>
            <person name="Ugalde R.A."/>
            <person name="Garcia E."/>
            <person name="Tolmasky M.E."/>
        </authorList>
    </citation>
    <scope>NUCLEOTIDE SEQUENCE [LARGE SCALE GENOMIC DNA]</scope>
    <source>
        <strain>ATCC 49188 / DSM 6882 / CCUG 24695 / JCM 21032 / LMG 3331 / NBRC 15819 / NCTC 12168 / Alc 37</strain>
    </source>
</reference>
<dbReference type="EC" id="2.1.2.9" evidence="1"/>
<dbReference type="EMBL" id="CP000758">
    <property type="protein sequence ID" value="ABS14062.1"/>
    <property type="molecule type" value="Genomic_DNA"/>
</dbReference>
<dbReference type="RefSeq" id="WP_012091436.1">
    <property type="nucleotide sequence ID" value="NC_009667.1"/>
</dbReference>
<dbReference type="SMR" id="A6WYK8"/>
<dbReference type="STRING" id="439375.Oant_1345"/>
<dbReference type="KEGG" id="oan:Oant_1345"/>
<dbReference type="PATRIC" id="fig|439375.7.peg.1410"/>
<dbReference type="eggNOG" id="COG0223">
    <property type="taxonomic scope" value="Bacteria"/>
</dbReference>
<dbReference type="HOGENOM" id="CLU_033347_1_2_5"/>
<dbReference type="PhylomeDB" id="A6WYK8"/>
<dbReference type="Proteomes" id="UP000002301">
    <property type="component" value="Chromosome 1"/>
</dbReference>
<dbReference type="GO" id="GO:0005829">
    <property type="term" value="C:cytosol"/>
    <property type="evidence" value="ECO:0007669"/>
    <property type="project" value="TreeGrafter"/>
</dbReference>
<dbReference type="GO" id="GO:0004479">
    <property type="term" value="F:methionyl-tRNA formyltransferase activity"/>
    <property type="evidence" value="ECO:0007669"/>
    <property type="project" value="UniProtKB-UniRule"/>
</dbReference>
<dbReference type="CDD" id="cd08646">
    <property type="entry name" value="FMT_core_Met-tRNA-FMT_N"/>
    <property type="match status" value="1"/>
</dbReference>
<dbReference type="CDD" id="cd08704">
    <property type="entry name" value="Met_tRNA_FMT_C"/>
    <property type="match status" value="1"/>
</dbReference>
<dbReference type="FunFam" id="3.40.50.12230:FF:000001">
    <property type="entry name" value="Methionyl-tRNA formyltransferase"/>
    <property type="match status" value="1"/>
</dbReference>
<dbReference type="Gene3D" id="3.10.25.10">
    <property type="entry name" value="Formyl transferase, C-terminal domain"/>
    <property type="match status" value="1"/>
</dbReference>
<dbReference type="Gene3D" id="3.40.50.170">
    <property type="entry name" value="Formyl transferase, N-terminal domain"/>
    <property type="match status" value="1"/>
</dbReference>
<dbReference type="HAMAP" id="MF_00182">
    <property type="entry name" value="Formyl_trans"/>
    <property type="match status" value="1"/>
</dbReference>
<dbReference type="InterPro" id="IPR005794">
    <property type="entry name" value="Fmt"/>
</dbReference>
<dbReference type="InterPro" id="IPR005793">
    <property type="entry name" value="Formyl_trans_C"/>
</dbReference>
<dbReference type="InterPro" id="IPR037022">
    <property type="entry name" value="Formyl_trans_C_sf"/>
</dbReference>
<dbReference type="InterPro" id="IPR002376">
    <property type="entry name" value="Formyl_transf_N"/>
</dbReference>
<dbReference type="InterPro" id="IPR036477">
    <property type="entry name" value="Formyl_transf_N_sf"/>
</dbReference>
<dbReference type="InterPro" id="IPR011034">
    <property type="entry name" value="Formyl_transferase-like_C_sf"/>
</dbReference>
<dbReference type="InterPro" id="IPR001555">
    <property type="entry name" value="GART_AS"/>
</dbReference>
<dbReference type="InterPro" id="IPR044135">
    <property type="entry name" value="Met-tRNA-FMT_C"/>
</dbReference>
<dbReference type="InterPro" id="IPR041711">
    <property type="entry name" value="Met-tRNA-FMT_N"/>
</dbReference>
<dbReference type="NCBIfam" id="TIGR00460">
    <property type="entry name" value="fmt"/>
    <property type="match status" value="1"/>
</dbReference>
<dbReference type="PANTHER" id="PTHR11138">
    <property type="entry name" value="METHIONYL-TRNA FORMYLTRANSFERASE"/>
    <property type="match status" value="1"/>
</dbReference>
<dbReference type="PANTHER" id="PTHR11138:SF5">
    <property type="entry name" value="METHIONYL-TRNA FORMYLTRANSFERASE, MITOCHONDRIAL"/>
    <property type="match status" value="1"/>
</dbReference>
<dbReference type="Pfam" id="PF02911">
    <property type="entry name" value="Formyl_trans_C"/>
    <property type="match status" value="1"/>
</dbReference>
<dbReference type="Pfam" id="PF00551">
    <property type="entry name" value="Formyl_trans_N"/>
    <property type="match status" value="1"/>
</dbReference>
<dbReference type="SUPFAM" id="SSF50486">
    <property type="entry name" value="FMT C-terminal domain-like"/>
    <property type="match status" value="1"/>
</dbReference>
<dbReference type="SUPFAM" id="SSF53328">
    <property type="entry name" value="Formyltransferase"/>
    <property type="match status" value="1"/>
</dbReference>
<dbReference type="PROSITE" id="PS00373">
    <property type="entry name" value="GART"/>
    <property type="match status" value="1"/>
</dbReference>
<protein>
    <recommendedName>
        <fullName evidence="1">Methionyl-tRNA formyltransferase</fullName>
        <ecNumber evidence="1">2.1.2.9</ecNumber>
    </recommendedName>
</protein>
<sequence>MRVVFMGTPEFSVPILTAIIGHGYEVVAAYTQPPRPAGRRGLELTKSPVHEKAEQFGIPVFTPKSLKGAEEQDVFASLEADVAIVVAYGLLLPQAILDAPRLGCYNGHASLLPRWRGAAPIQRAIMAGDSETGMMIMKMDAGLDTGPVAMAEKVAITPDMTAGELHDRLSMIGADLMIRALGALERESLALQPQAEEGVTYAAKIDKAEARIDWSKPAQDVHNTIRGLSPFPGAWCEMEINGAVERVKLQRSALGEGSGEPGTVLDDRLTVACGEGAVRLVTLQRSGGKPLPAQEFLRGAQVSKVL</sequence>
<name>FMT_BRUA4</name>
<keyword id="KW-0648">Protein biosynthesis</keyword>
<keyword id="KW-1185">Reference proteome</keyword>
<keyword id="KW-0808">Transferase</keyword>
<accession>A6WYK8</accession>
<comment type="function">
    <text evidence="1">Attaches a formyl group to the free amino group of methionyl-tRNA(fMet). The formyl group appears to play a dual role in the initiator identity of N-formylmethionyl-tRNA by promoting its recognition by IF2 and preventing the misappropriation of this tRNA by the elongation apparatus.</text>
</comment>
<comment type="catalytic activity">
    <reaction evidence="1">
        <text>L-methionyl-tRNA(fMet) + (6R)-10-formyltetrahydrofolate = N-formyl-L-methionyl-tRNA(fMet) + (6S)-5,6,7,8-tetrahydrofolate + H(+)</text>
        <dbReference type="Rhea" id="RHEA:24380"/>
        <dbReference type="Rhea" id="RHEA-COMP:9952"/>
        <dbReference type="Rhea" id="RHEA-COMP:9953"/>
        <dbReference type="ChEBI" id="CHEBI:15378"/>
        <dbReference type="ChEBI" id="CHEBI:57453"/>
        <dbReference type="ChEBI" id="CHEBI:78530"/>
        <dbReference type="ChEBI" id="CHEBI:78844"/>
        <dbReference type="ChEBI" id="CHEBI:195366"/>
        <dbReference type="EC" id="2.1.2.9"/>
    </reaction>
</comment>
<comment type="similarity">
    <text evidence="1">Belongs to the Fmt family.</text>
</comment>
<evidence type="ECO:0000255" key="1">
    <source>
        <dbReference type="HAMAP-Rule" id="MF_00182"/>
    </source>
</evidence>
<organism>
    <name type="scientific">Brucella anthropi (strain ATCC 49188 / DSM 6882 / CCUG 24695 / JCM 21032 / LMG 3331 / NBRC 15819 / NCTC 12168 / Alc 37)</name>
    <name type="common">Ochrobactrum anthropi</name>
    <dbReference type="NCBI Taxonomy" id="439375"/>
    <lineage>
        <taxon>Bacteria</taxon>
        <taxon>Pseudomonadati</taxon>
        <taxon>Pseudomonadota</taxon>
        <taxon>Alphaproteobacteria</taxon>
        <taxon>Hyphomicrobiales</taxon>
        <taxon>Brucellaceae</taxon>
        <taxon>Brucella/Ochrobactrum group</taxon>
        <taxon>Brucella</taxon>
    </lineage>
</organism>
<feature type="chain" id="PRO_1000020115" description="Methionyl-tRNA formyltransferase">
    <location>
        <begin position="1"/>
        <end position="306"/>
    </location>
</feature>
<feature type="binding site" evidence="1">
    <location>
        <begin position="110"/>
        <end position="113"/>
    </location>
    <ligand>
        <name>(6S)-5,6,7,8-tetrahydrofolate</name>
        <dbReference type="ChEBI" id="CHEBI:57453"/>
    </ligand>
</feature>
<proteinExistence type="inferred from homology"/>
<gene>
    <name evidence="1" type="primary">fmt</name>
    <name type="ordered locus">Oant_1345</name>
</gene>